<name>UBIC_NITEC</name>
<feature type="chain" id="PRO_0000292069" description="Probable chorismate pyruvate-lyase">
    <location>
        <begin position="1"/>
        <end position="178"/>
    </location>
</feature>
<feature type="binding site" evidence="1">
    <location>
        <position position="72"/>
    </location>
    <ligand>
        <name>substrate</name>
    </ligand>
</feature>
<feature type="binding site" evidence="1">
    <location>
        <position position="110"/>
    </location>
    <ligand>
        <name>substrate</name>
    </ligand>
</feature>
<feature type="binding site" evidence="1">
    <location>
        <position position="169"/>
    </location>
    <ligand>
        <name>substrate</name>
    </ligand>
</feature>
<reference key="1">
    <citation type="journal article" date="2007" name="Environ. Microbiol.">
        <title>Whole-genome analysis of the ammonia-oxidizing bacterium, Nitrosomonas eutropha C91: implications for niche adaptation.</title>
        <authorList>
            <person name="Stein L.Y."/>
            <person name="Arp D.J."/>
            <person name="Berube P.M."/>
            <person name="Chain P.S."/>
            <person name="Hauser L."/>
            <person name="Jetten M.S."/>
            <person name="Klotz M.G."/>
            <person name="Larimer F.W."/>
            <person name="Norton J.M."/>
            <person name="Op den Camp H.J.M."/>
            <person name="Shin M."/>
            <person name="Wei X."/>
        </authorList>
    </citation>
    <scope>NUCLEOTIDE SEQUENCE [LARGE SCALE GENOMIC DNA]</scope>
    <source>
        <strain>DSM 101675 / C91 / Nm57</strain>
    </source>
</reference>
<sequence>MKANPPLAWHPVPVSAPVNLRWWLMHQESLTRLLQAHCEHFRVEPVFQTLATACIDELEVMNLRRQNQVLVREVYLRCNETPVVFAHSIVKKEHLRGAWRGLSRLGNRSLGTMLFTNPLIQRTPLAFKKLKPHHPLFERACKQLQMRPINLWARRSLFILLRQPILVTEVFLPAIHQL</sequence>
<dbReference type="EC" id="4.1.3.40" evidence="1"/>
<dbReference type="EMBL" id="CP000450">
    <property type="protein sequence ID" value="ABI59384.1"/>
    <property type="status" value="ALT_INIT"/>
    <property type="molecule type" value="Genomic_DNA"/>
</dbReference>
<dbReference type="RefSeq" id="WP_041353471.1">
    <property type="nucleotide sequence ID" value="NC_008344.1"/>
</dbReference>
<dbReference type="SMR" id="Q0AGZ8"/>
<dbReference type="STRING" id="335283.Neut_1129"/>
<dbReference type="KEGG" id="net:Neut_1129"/>
<dbReference type="eggNOG" id="COG3161">
    <property type="taxonomic scope" value="Bacteria"/>
</dbReference>
<dbReference type="HOGENOM" id="CLU_096824_2_0_4"/>
<dbReference type="OrthoDB" id="8606430at2"/>
<dbReference type="UniPathway" id="UPA00232"/>
<dbReference type="Proteomes" id="UP000001966">
    <property type="component" value="Chromosome"/>
</dbReference>
<dbReference type="GO" id="GO:0005829">
    <property type="term" value="C:cytosol"/>
    <property type="evidence" value="ECO:0007669"/>
    <property type="project" value="TreeGrafter"/>
</dbReference>
<dbReference type="GO" id="GO:0008813">
    <property type="term" value="F:chorismate lyase activity"/>
    <property type="evidence" value="ECO:0007669"/>
    <property type="project" value="UniProtKB-UniRule"/>
</dbReference>
<dbReference type="GO" id="GO:0042866">
    <property type="term" value="P:pyruvate biosynthetic process"/>
    <property type="evidence" value="ECO:0007669"/>
    <property type="project" value="UniProtKB-UniRule"/>
</dbReference>
<dbReference type="GO" id="GO:0006744">
    <property type="term" value="P:ubiquinone biosynthetic process"/>
    <property type="evidence" value="ECO:0007669"/>
    <property type="project" value="UniProtKB-UniRule"/>
</dbReference>
<dbReference type="Gene3D" id="3.40.1410.10">
    <property type="entry name" value="Chorismate lyase-like"/>
    <property type="match status" value="1"/>
</dbReference>
<dbReference type="HAMAP" id="MF_01632">
    <property type="entry name" value="UbiC"/>
    <property type="match status" value="1"/>
</dbReference>
<dbReference type="InterPro" id="IPR007440">
    <property type="entry name" value="Chorismate--pyruvate_lyase"/>
</dbReference>
<dbReference type="InterPro" id="IPR028978">
    <property type="entry name" value="Chorismate_lyase_/UTRA_dom_sf"/>
</dbReference>
<dbReference type="PANTHER" id="PTHR38683">
    <property type="entry name" value="CHORISMATE PYRUVATE-LYASE"/>
    <property type="match status" value="1"/>
</dbReference>
<dbReference type="PANTHER" id="PTHR38683:SF1">
    <property type="entry name" value="CHORISMATE PYRUVATE-LYASE"/>
    <property type="match status" value="1"/>
</dbReference>
<dbReference type="Pfam" id="PF04345">
    <property type="entry name" value="Chor_lyase"/>
    <property type="match status" value="1"/>
</dbReference>
<dbReference type="SUPFAM" id="SSF64288">
    <property type="entry name" value="Chorismate lyase-like"/>
    <property type="match status" value="1"/>
</dbReference>
<gene>
    <name evidence="1" type="primary">ubiC</name>
    <name type="ordered locus">Neut_1129</name>
</gene>
<accession>Q0AGZ8</accession>
<keyword id="KW-0963">Cytoplasm</keyword>
<keyword id="KW-0456">Lyase</keyword>
<keyword id="KW-0670">Pyruvate</keyword>
<keyword id="KW-0831">Ubiquinone biosynthesis</keyword>
<organism>
    <name type="scientific">Nitrosomonas eutropha (strain DSM 101675 / C91 / Nm57)</name>
    <dbReference type="NCBI Taxonomy" id="335283"/>
    <lineage>
        <taxon>Bacteria</taxon>
        <taxon>Pseudomonadati</taxon>
        <taxon>Pseudomonadota</taxon>
        <taxon>Betaproteobacteria</taxon>
        <taxon>Nitrosomonadales</taxon>
        <taxon>Nitrosomonadaceae</taxon>
        <taxon>Nitrosomonas</taxon>
    </lineage>
</organism>
<proteinExistence type="inferred from homology"/>
<protein>
    <recommendedName>
        <fullName evidence="1">Probable chorismate pyruvate-lyase</fullName>
        <shortName evidence="1">CL</shortName>
        <shortName evidence="1">CPL</shortName>
        <ecNumber evidence="1">4.1.3.40</ecNumber>
    </recommendedName>
</protein>
<comment type="function">
    <text evidence="1">Removes the pyruvyl group from chorismate, with concomitant aromatization of the ring, to provide 4-hydroxybenzoate (4HB) for the ubiquinone pathway.</text>
</comment>
<comment type="catalytic activity">
    <reaction evidence="1">
        <text>chorismate = 4-hydroxybenzoate + pyruvate</text>
        <dbReference type="Rhea" id="RHEA:16505"/>
        <dbReference type="ChEBI" id="CHEBI:15361"/>
        <dbReference type="ChEBI" id="CHEBI:17879"/>
        <dbReference type="ChEBI" id="CHEBI:29748"/>
        <dbReference type="EC" id="4.1.3.40"/>
    </reaction>
</comment>
<comment type="pathway">
    <text evidence="1">Cofactor biosynthesis; ubiquinone biosynthesis.</text>
</comment>
<comment type="subcellular location">
    <subcellularLocation>
        <location evidence="1">Cytoplasm</location>
    </subcellularLocation>
</comment>
<comment type="similarity">
    <text evidence="1">Belongs to the UbiC family.</text>
</comment>
<comment type="sequence caution" evidence="2">
    <conflict type="erroneous initiation">
        <sequence resource="EMBL-CDS" id="ABI59384"/>
    </conflict>
    <text>Extended N-terminus.</text>
</comment>
<evidence type="ECO:0000255" key="1">
    <source>
        <dbReference type="HAMAP-Rule" id="MF_01632"/>
    </source>
</evidence>
<evidence type="ECO:0000305" key="2"/>